<proteinExistence type="predicted"/>
<name>YR790_MIMIV</name>
<organismHost>
    <name type="scientific">Acanthamoeba polyphaga</name>
    <name type="common">Amoeba</name>
    <dbReference type="NCBI Taxonomy" id="5757"/>
</organismHost>
<dbReference type="EMBL" id="AY653733">
    <property type="protein sequence ID" value="AAV51050.1"/>
    <property type="molecule type" value="Genomic_DNA"/>
</dbReference>
<dbReference type="SMR" id="Q5UQ05"/>
<dbReference type="KEGG" id="vg:9925451"/>
<dbReference type="Proteomes" id="UP000001134">
    <property type="component" value="Genome"/>
</dbReference>
<protein>
    <recommendedName>
        <fullName>Uncharacterized protein R790</fullName>
    </recommendedName>
</protein>
<accession>Q5UQ05</accession>
<gene>
    <name type="ordered locus">MIMI_R790</name>
</gene>
<reference key="1">
    <citation type="journal article" date="2004" name="Science">
        <title>The 1.2-megabase genome sequence of Mimivirus.</title>
        <authorList>
            <person name="Raoult D."/>
            <person name="Audic S."/>
            <person name="Robert C."/>
            <person name="Abergel C."/>
            <person name="Renesto P."/>
            <person name="Ogata H."/>
            <person name="La Scola B."/>
            <person name="Susan M."/>
            <person name="Claverie J.-M."/>
        </authorList>
    </citation>
    <scope>NUCLEOTIDE SEQUENCE [LARGE SCALE GENOMIC DNA]</scope>
    <source>
        <strain>Rowbotham-Bradford</strain>
    </source>
</reference>
<organism>
    <name type="scientific">Acanthamoeba polyphaga mimivirus</name>
    <name type="common">APMV</name>
    <dbReference type="NCBI Taxonomy" id="212035"/>
    <lineage>
        <taxon>Viruses</taxon>
        <taxon>Varidnaviria</taxon>
        <taxon>Bamfordvirae</taxon>
        <taxon>Nucleocytoviricota</taxon>
        <taxon>Megaviricetes</taxon>
        <taxon>Imitervirales</taxon>
        <taxon>Mimiviridae</taxon>
        <taxon>Megamimivirinae</taxon>
        <taxon>Mimivirus</taxon>
        <taxon>Mimivirus bradfordmassiliense</taxon>
    </lineage>
</organism>
<keyword id="KW-1185">Reference proteome</keyword>
<sequence length="155" mass="18406">MLSINTEIKLQECLRNKCNHYQSNFALMDINGIYNTIMNEHKKFNLPLSIYLDRLFKQIQNGHNDLIQREKILKKITDTVSKKNISDSQFTNVKLLFIVYLMDYELYDSYEGKFDKEAIYQFVIIEHDWLNKHILSLVSTMMIIKDTLSEVVKMS</sequence>
<feature type="chain" id="PRO_0000071353" description="Uncharacterized protein R790">
    <location>
        <begin position="1"/>
        <end position="155"/>
    </location>
</feature>